<comment type="similarity">
    <text evidence="1">Belongs to the bacterial ribosomal protein bS16 family.</text>
</comment>
<sequence>MSVKIRLKRMGAKKRPYYRVVVMNSTSPRDGRAIEELGYYHPVEKQNQIKIKEDRMKDWISKGAILSDTVKMLLNKNNLNAKSQEV</sequence>
<evidence type="ECO:0000255" key="1">
    <source>
        <dbReference type="HAMAP-Rule" id="MF_00385"/>
    </source>
</evidence>
<evidence type="ECO:0000305" key="2"/>
<accession>B7J2Q0</accession>
<feature type="chain" id="PRO_1000196342" description="Small ribosomal subunit protein bS16">
    <location>
        <begin position="1"/>
        <end position="86"/>
    </location>
</feature>
<organism>
    <name type="scientific">Borreliella burgdorferi (strain ZS7)</name>
    <name type="common">Borrelia burgdorferi</name>
    <dbReference type="NCBI Taxonomy" id="445985"/>
    <lineage>
        <taxon>Bacteria</taxon>
        <taxon>Pseudomonadati</taxon>
        <taxon>Spirochaetota</taxon>
        <taxon>Spirochaetia</taxon>
        <taxon>Spirochaetales</taxon>
        <taxon>Borreliaceae</taxon>
        <taxon>Borreliella</taxon>
    </lineage>
</organism>
<name>RS16_BORBZ</name>
<reference key="1">
    <citation type="journal article" date="2011" name="J. Bacteriol.">
        <title>Whole-genome sequences of thirteen isolates of Borrelia burgdorferi.</title>
        <authorList>
            <person name="Schutzer S.E."/>
            <person name="Fraser-Liggett C.M."/>
            <person name="Casjens S.R."/>
            <person name="Qiu W.G."/>
            <person name="Dunn J.J."/>
            <person name="Mongodin E.F."/>
            <person name="Luft B.J."/>
        </authorList>
    </citation>
    <scope>NUCLEOTIDE SEQUENCE [LARGE SCALE GENOMIC DNA]</scope>
    <source>
        <strain>ZS7</strain>
    </source>
</reference>
<protein>
    <recommendedName>
        <fullName evidence="1">Small ribosomal subunit protein bS16</fullName>
    </recommendedName>
    <alternativeName>
        <fullName evidence="2">30S ribosomal protein S16</fullName>
    </alternativeName>
</protein>
<gene>
    <name evidence="1" type="primary">rpsP</name>
    <name type="ordered locus">BbuZS7_0716</name>
</gene>
<dbReference type="EMBL" id="CP001205">
    <property type="protein sequence ID" value="ACK74440.1"/>
    <property type="molecule type" value="Genomic_DNA"/>
</dbReference>
<dbReference type="RefSeq" id="WP_002557282.1">
    <property type="nucleotide sequence ID" value="NC_011728.1"/>
</dbReference>
<dbReference type="SMR" id="B7J2Q0"/>
<dbReference type="GeneID" id="56567505"/>
<dbReference type="KEGG" id="bbz:BbuZS7_0716"/>
<dbReference type="HOGENOM" id="CLU_100590_5_0_12"/>
<dbReference type="Proteomes" id="UP000006901">
    <property type="component" value="Chromosome"/>
</dbReference>
<dbReference type="GO" id="GO:0005737">
    <property type="term" value="C:cytoplasm"/>
    <property type="evidence" value="ECO:0007669"/>
    <property type="project" value="UniProtKB-ARBA"/>
</dbReference>
<dbReference type="GO" id="GO:0015935">
    <property type="term" value="C:small ribosomal subunit"/>
    <property type="evidence" value="ECO:0007669"/>
    <property type="project" value="TreeGrafter"/>
</dbReference>
<dbReference type="GO" id="GO:0003735">
    <property type="term" value="F:structural constituent of ribosome"/>
    <property type="evidence" value="ECO:0007669"/>
    <property type="project" value="InterPro"/>
</dbReference>
<dbReference type="GO" id="GO:0006412">
    <property type="term" value="P:translation"/>
    <property type="evidence" value="ECO:0007669"/>
    <property type="project" value="UniProtKB-UniRule"/>
</dbReference>
<dbReference type="Gene3D" id="3.30.1320.10">
    <property type="match status" value="1"/>
</dbReference>
<dbReference type="HAMAP" id="MF_00385">
    <property type="entry name" value="Ribosomal_bS16"/>
    <property type="match status" value="1"/>
</dbReference>
<dbReference type="InterPro" id="IPR000307">
    <property type="entry name" value="Ribosomal_bS16"/>
</dbReference>
<dbReference type="InterPro" id="IPR020592">
    <property type="entry name" value="Ribosomal_bS16_CS"/>
</dbReference>
<dbReference type="InterPro" id="IPR023803">
    <property type="entry name" value="Ribosomal_bS16_dom_sf"/>
</dbReference>
<dbReference type="NCBIfam" id="TIGR00002">
    <property type="entry name" value="S16"/>
    <property type="match status" value="1"/>
</dbReference>
<dbReference type="PANTHER" id="PTHR12919">
    <property type="entry name" value="30S RIBOSOMAL PROTEIN S16"/>
    <property type="match status" value="1"/>
</dbReference>
<dbReference type="PANTHER" id="PTHR12919:SF20">
    <property type="entry name" value="SMALL RIBOSOMAL SUBUNIT PROTEIN BS16M"/>
    <property type="match status" value="1"/>
</dbReference>
<dbReference type="Pfam" id="PF00886">
    <property type="entry name" value="Ribosomal_S16"/>
    <property type="match status" value="1"/>
</dbReference>
<dbReference type="SUPFAM" id="SSF54565">
    <property type="entry name" value="Ribosomal protein S16"/>
    <property type="match status" value="1"/>
</dbReference>
<dbReference type="PROSITE" id="PS00732">
    <property type="entry name" value="RIBOSOMAL_S16"/>
    <property type="match status" value="1"/>
</dbReference>
<keyword id="KW-0687">Ribonucleoprotein</keyword>
<keyword id="KW-0689">Ribosomal protein</keyword>
<proteinExistence type="inferred from homology"/>